<accession>P29498</accession>
<accession>Q8T5U8</accession>
<accession>Q8T5U9</accession>
<name>FABP_SCHMA</name>
<keyword id="KW-0002">3D-structure</keyword>
<keyword id="KW-0025">Alternative splicing</keyword>
<keyword id="KW-0963">Cytoplasm</keyword>
<keyword id="KW-0446">Lipid-binding</keyword>
<keyword id="KW-1185">Reference proteome</keyword>
<keyword id="KW-0813">Transport</keyword>
<sequence length="133" mass="14848">MSSFLGKWKLSESHNFDAVMSKLGVSWATRQIGNTVTPTVTFTMDGDKMTMLTESTFKNLSCTFKFGEEFDEKTSDGRNVKSVVEKNSESKLTQTQVDPKNTTVIVREVDGDTMKTTVTVGDVTAIRNYKRLS</sequence>
<organism>
    <name type="scientific">Schistosoma mansoni</name>
    <name type="common">Blood fluke</name>
    <dbReference type="NCBI Taxonomy" id="6183"/>
    <lineage>
        <taxon>Eukaryota</taxon>
        <taxon>Metazoa</taxon>
        <taxon>Spiralia</taxon>
        <taxon>Lophotrochozoa</taxon>
        <taxon>Platyhelminthes</taxon>
        <taxon>Trematoda</taxon>
        <taxon>Digenea</taxon>
        <taxon>Strigeidida</taxon>
        <taxon>Schistosomatoidea</taxon>
        <taxon>Schistosomatidae</taxon>
        <taxon>Schistosoma</taxon>
    </lineage>
</organism>
<comment type="function">
    <text>May play a role in the transport of fatty acids. Binds various fatty acids, such as arachidonic, oleic, palmitic and linolenic acid (in vitro).</text>
</comment>
<comment type="subcellular location">
    <subcellularLocation>
        <location evidence="1">Cytoplasm</location>
    </subcellularLocation>
</comment>
<comment type="alternative products">
    <event type="alternative splicing"/>
    <isoform>
        <id>P29498-1</id>
        <name>1</name>
        <sequence type="displayed"/>
    </isoform>
    <isoform>
        <id>P29498-2</id>
        <name>2</name>
        <name>Delta E3</name>
        <sequence type="described" ref="VSP_010234"/>
    </isoform>
</comment>
<comment type="tissue specificity">
    <text>Tubercles, muscle layers and body.</text>
</comment>
<comment type="domain">
    <text>Forms a beta-barrel structure that accommodates hydrophobic ligands in its interior.</text>
</comment>
<comment type="similarity">
    <text evidence="4">Belongs to the calycin superfamily. Fatty-acid binding protein (FABP) family.</text>
</comment>
<proteinExistence type="evidence at protein level"/>
<reference key="1">
    <citation type="journal article" date="1991" name="J. Biol. Chem.">
        <title>A 14-kDa Schistosoma mansoni polypeptide is homologous to a gene family of fatty acid binding proteins.</title>
        <authorList>
            <person name="Moser D."/>
            <person name="Tendler M."/>
            <person name="Griffiths G."/>
            <person name="Klinkert M.-Q."/>
        </authorList>
    </citation>
    <scope>NUCLEOTIDE SEQUENCE (ISOFORM 1)</scope>
</reference>
<reference key="2">
    <citation type="submission" date="2001-09" db="EMBL/GenBank/DDBJ databases">
        <title>Cloning and sequence of the gene encoding Schistosoma mansoni fatty acid-binding protein, Sm14.</title>
        <authorList>
            <person name="Romero-Ramos C.R."/>
            <person name="Tendler M."/>
            <person name="Ho P.L."/>
        </authorList>
    </citation>
    <scope>NUCLEOTIDE SEQUENCE (ISOFORM 1)</scope>
    <source>
        <strain>Brazilian BH</strain>
    </source>
</reference>
<reference key="3">
    <citation type="submission" date="2002-03" db="EMBL/GenBank/DDBJ databases">
        <title>Polymorphism of the Schistosoma mansoni Sm14 fatty acid-binding protein: structural and functional analysis.</title>
        <authorList>
            <person name="Romero-Ramos C.R."/>
            <person name="Figueredo R.C.R."/>
            <person name="Pertinhez T.A."/>
            <person name="Nasciemento A.L.T.O."/>
            <person name="Tendler M."/>
            <person name="Raw I."/>
            <person name="Spisni A."/>
            <person name="Ho P.L."/>
        </authorList>
    </citation>
    <scope>NUCLEOTIDE SEQUENCE (ISOFORMS 1 AND 2)</scope>
    <scope>VARIANT THR-20</scope>
    <source>
        <strain>Brazilian BH</strain>
        <strain>LE</strain>
    </source>
</reference>
<reference evidence="5 6" key="4">
    <citation type="journal article" date="2004" name="Biochemistry">
        <title>Schistosoma mansoni fatty acid binding protein: specificity and functional control as revealed by crystallographic structure.</title>
        <authorList>
            <person name="Angelucci F."/>
            <person name="Johnson K.A."/>
            <person name="Baiocco P."/>
            <person name="Miele A.E."/>
            <person name="Brunori M."/>
            <person name="Valle C."/>
            <person name="Vigorosi F."/>
            <person name="Troiani A.R."/>
            <person name="Liberti P."/>
            <person name="Cioli D."/>
            <person name="Klinkert M.-Q."/>
            <person name="Bellelli A."/>
        </authorList>
    </citation>
    <scope>X-RAY CRYSTALLOGRAPHY (1.85 ANGSTROMS) IN COMPLEXES WITH ARACHIDONATE AND OLEATE</scope>
</reference>
<feature type="chain" id="PRO_0000067358" description="14 kDa fatty acid-binding protein">
    <location>
        <begin position="1"/>
        <end position="133"/>
    </location>
</feature>
<feature type="binding site" evidence="2 6">
    <location>
        <position position="107"/>
    </location>
    <ligand>
        <name>(5Z,8Z,11Z,14Z)-eicosatetraenoate</name>
        <dbReference type="ChEBI" id="CHEBI:32395"/>
    </ligand>
</feature>
<feature type="binding site" evidence="2 5">
    <location>
        <position position="107"/>
    </location>
    <ligand>
        <name>(9Z)-octadecenoate</name>
        <dbReference type="ChEBI" id="CHEBI:30823"/>
    </ligand>
</feature>
<feature type="binding site" evidence="2 6">
    <location>
        <begin position="127"/>
        <end position="129"/>
    </location>
    <ligand>
        <name>(5Z,8Z,11Z,14Z)-eicosatetraenoate</name>
        <dbReference type="ChEBI" id="CHEBI:32395"/>
    </ligand>
</feature>
<feature type="binding site" evidence="2 5">
    <location>
        <begin position="127"/>
        <end position="129"/>
    </location>
    <ligand>
        <name>(9Z)-octadecenoate</name>
        <dbReference type="ChEBI" id="CHEBI:30823"/>
    </ligand>
</feature>
<feature type="splice variant" id="VSP_010234" description="In isoform 2." evidence="4">
    <location>
        <begin position="82"/>
        <end position="116"/>
    </location>
</feature>
<feature type="sequence variant" evidence="3">
    <original>M</original>
    <variation>T</variation>
    <location>
        <position position="20"/>
    </location>
</feature>
<feature type="helix" evidence="7">
    <location>
        <begin position="2"/>
        <end position="4"/>
    </location>
</feature>
<feature type="strand" evidence="7">
    <location>
        <begin position="6"/>
        <end position="15"/>
    </location>
</feature>
<feature type="helix" evidence="7">
    <location>
        <begin position="16"/>
        <end position="22"/>
    </location>
</feature>
<feature type="helix" evidence="7">
    <location>
        <begin position="27"/>
        <end position="33"/>
    </location>
</feature>
<feature type="strand" evidence="7">
    <location>
        <begin position="39"/>
        <end position="45"/>
    </location>
</feature>
<feature type="strand" evidence="7">
    <location>
        <begin position="48"/>
        <end position="54"/>
    </location>
</feature>
<feature type="strand" evidence="7">
    <location>
        <begin position="60"/>
        <end position="64"/>
    </location>
</feature>
<feature type="strand" evidence="8">
    <location>
        <begin position="66"/>
        <end position="68"/>
    </location>
</feature>
<feature type="strand" evidence="7">
    <location>
        <begin position="70"/>
        <end position="73"/>
    </location>
</feature>
<feature type="turn" evidence="8">
    <location>
        <begin position="75"/>
        <end position="77"/>
    </location>
</feature>
<feature type="strand" evidence="7">
    <location>
        <begin position="79"/>
        <end position="88"/>
    </location>
</feature>
<feature type="strand" evidence="7">
    <location>
        <begin position="91"/>
        <end position="97"/>
    </location>
</feature>
<feature type="strand" evidence="7">
    <location>
        <begin position="102"/>
        <end position="110"/>
    </location>
</feature>
<feature type="strand" evidence="7">
    <location>
        <begin position="113"/>
        <end position="120"/>
    </location>
</feature>
<feature type="strand" evidence="7">
    <location>
        <begin position="123"/>
        <end position="131"/>
    </location>
</feature>
<protein>
    <recommendedName>
        <fullName>14 kDa fatty acid-binding protein</fullName>
    </recommendedName>
    <alternativeName>
        <fullName>Sm14</fullName>
    </alternativeName>
</protein>
<dbReference type="EMBL" id="M60895">
    <property type="protein sequence ID" value="AAA63516.1"/>
    <property type="molecule type" value="mRNA"/>
</dbReference>
<dbReference type="EMBL" id="AY055467">
    <property type="protein sequence ID" value="AAL15461.1"/>
    <property type="molecule type" value="Genomic_DNA"/>
</dbReference>
<dbReference type="EMBL" id="AF492389">
    <property type="protein sequence ID" value="AAM18480.1"/>
    <property type="molecule type" value="mRNA"/>
</dbReference>
<dbReference type="EMBL" id="AF492390">
    <property type="protein sequence ID" value="AAM18481.1"/>
    <property type="molecule type" value="mRNA"/>
</dbReference>
<dbReference type="PIR" id="A39818">
    <property type="entry name" value="A39818"/>
</dbReference>
<dbReference type="RefSeq" id="XP_018647195.1">
    <molecule id="P29498-2"/>
    <property type="nucleotide sequence ID" value="XM_018792798.1"/>
</dbReference>
<dbReference type="RefSeq" id="XP_018647196.1">
    <molecule id="P29498-1"/>
    <property type="nucleotide sequence ID" value="XM_018792809.1"/>
</dbReference>
<dbReference type="PDB" id="1VYF">
    <property type="method" value="X-ray"/>
    <property type="resolution" value="1.85 A"/>
    <property type="chains" value="A=1-133"/>
</dbReference>
<dbReference type="PDB" id="1VYG">
    <property type="method" value="X-ray"/>
    <property type="resolution" value="2.40 A"/>
    <property type="chains" value="A=1-133"/>
</dbReference>
<dbReference type="PDB" id="2POA">
    <property type="method" value="NMR"/>
    <property type="chains" value="A=1-133"/>
</dbReference>
<dbReference type="PDBsum" id="1VYF"/>
<dbReference type="PDBsum" id="1VYG"/>
<dbReference type="PDBsum" id="2POA"/>
<dbReference type="BMRB" id="P29498"/>
<dbReference type="SMR" id="P29498"/>
<dbReference type="FunCoup" id="P29498">
    <property type="interactions" value="93"/>
</dbReference>
<dbReference type="STRING" id="6183.P29498"/>
<dbReference type="DrugBank" id="DB04557">
    <property type="generic name" value="Arachidonic Acid"/>
</dbReference>
<dbReference type="EnsemblMetazoa" id="Smp_095360.1">
    <molecule id="P29498-1"/>
    <property type="protein sequence ID" value="Smp_095360.1"/>
    <property type="gene ID" value="Smp_095360"/>
</dbReference>
<dbReference type="GeneID" id="8344852"/>
<dbReference type="KEGG" id="smm:Smp_095360.1"/>
<dbReference type="WBParaSite" id="Smp_095360.1">
    <property type="protein sequence ID" value="Smp_095360.1"/>
    <property type="gene ID" value="Smp_095360"/>
</dbReference>
<dbReference type="CTD" id="8344852"/>
<dbReference type="eggNOG" id="KOG4015">
    <property type="taxonomic scope" value="Eukaryota"/>
</dbReference>
<dbReference type="HOGENOM" id="CLU_113772_0_2_1"/>
<dbReference type="InParanoid" id="P29498"/>
<dbReference type="OMA" id="ADNRQCK"/>
<dbReference type="OrthoDB" id="412780at2759"/>
<dbReference type="PhylomeDB" id="P29498"/>
<dbReference type="EvolutionaryTrace" id="P29498"/>
<dbReference type="Proteomes" id="UP000008854">
    <property type="component" value="Unassembled WGS sequence"/>
</dbReference>
<dbReference type="ExpressionAtlas" id="P29498">
    <property type="expression patterns" value="baseline"/>
</dbReference>
<dbReference type="GO" id="GO:0005737">
    <property type="term" value="C:cytoplasm"/>
    <property type="evidence" value="ECO:0007669"/>
    <property type="project" value="UniProtKB-SubCell"/>
</dbReference>
<dbReference type="GO" id="GO:0008289">
    <property type="term" value="F:lipid binding"/>
    <property type="evidence" value="ECO:0007669"/>
    <property type="project" value="UniProtKB-KW"/>
</dbReference>
<dbReference type="CDD" id="cd00742">
    <property type="entry name" value="FABP"/>
    <property type="match status" value="1"/>
</dbReference>
<dbReference type="FunFam" id="2.40.128.20:FF:000001">
    <property type="entry name" value="Fatty acid-binding protein, adipocyte"/>
    <property type="match status" value="1"/>
</dbReference>
<dbReference type="Gene3D" id="2.40.128.20">
    <property type="match status" value="1"/>
</dbReference>
<dbReference type="InterPro" id="IPR012674">
    <property type="entry name" value="Calycin"/>
</dbReference>
<dbReference type="InterPro" id="IPR000463">
    <property type="entry name" value="Fatty_acid-bd"/>
</dbReference>
<dbReference type="InterPro" id="IPR031259">
    <property type="entry name" value="ILBP"/>
</dbReference>
<dbReference type="InterPro" id="IPR000566">
    <property type="entry name" value="Lipocln_cytosolic_FA-bd_dom"/>
</dbReference>
<dbReference type="PANTHER" id="PTHR11955">
    <property type="entry name" value="FATTY ACID BINDING PROTEIN"/>
    <property type="match status" value="1"/>
</dbReference>
<dbReference type="Pfam" id="PF00061">
    <property type="entry name" value="Lipocalin"/>
    <property type="match status" value="1"/>
</dbReference>
<dbReference type="PRINTS" id="PR00178">
    <property type="entry name" value="FATTYACIDBP"/>
</dbReference>
<dbReference type="SUPFAM" id="SSF50814">
    <property type="entry name" value="Lipocalins"/>
    <property type="match status" value="1"/>
</dbReference>
<dbReference type="PROSITE" id="PS00214">
    <property type="entry name" value="FABP"/>
    <property type="match status" value="1"/>
</dbReference>
<evidence type="ECO:0000250" key="1"/>
<evidence type="ECO:0000269" key="2">
    <source>
    </source>
</evidence>
<evidence type="ECO:0000269" key="3">
    <source ref="3"/>
</evidence>
<evidence type="ECO:0000305" key="4"/>
<evidence type="ECO:0007744" key="5">
    <source>
        <dbReference type="PDB" id="1VYF"/>
    </source>
</evidence>
<evidence type="ECO:0007744" key="6">
    <source>
        <dbReference type="PDB" id="1VYG"/>
    </source>
</evidence>
<evidence type="ECO:0007829" key="7">
    <source>
        <dbReference type="PDB" id="1VYF"/>
    </source>
</evidence>
<evidence type="ECO:0007829" key="8">
    <source>
        <dbReference type="PDB" id="2POA"/>
    </source>
</evidence>